<evidence type="ECO:0000255" key="1"/>
<evidence type="ECO:0000255" key="2">
    <source>
        <dbReference type="PROSITE-ProRule" id="PRU00693"/>
    </source>
</evidence>
<evidence type="ECO:0000256" key="3">
    <source>
        <dbReference type="SAM" id="MobiDB-lite"/>
    </source>
</evidence>
<evidence type="ECO:0000269" key="4">
    <source>
    </source>
</evidence>
<evidence type="ECO:0000269" key="5">
    <source>
    </source>
</evidence>
<evidence type="ECO:0000269" key="6">
    <source>
    </source>
</evidence>
<proteinExistence type="evidence at protein level"/>
<reference key="1">
    <citation type="journal article" date="2000" name="Science">
        <title>The genome sequence of Drosophila melanogaster.</title>
        <authorList>
            <person name="Adams M.D."/>
            <person name="Celniker S.E."/>
            <person name="Holt R.A."/>
            <person name="Evans C.A."/>
            <person name="Gocayne J.D."/>
            <person name="Amanatides P.G."/>
            <person name="Scherer S.E."/>
            <person name="Li P.W."/>
            <person name="Hoskins R.A."/>
            <person name="Galle R.F."/>
            <person name="George R.A."/>
            <person name="Lewis S.E."/>
            <person name="Richards S."/>
            <person name="Ashburner M."/>
            <person name="Henderson S.N."/>
            <person name="Sutton G.G."/>
            <person name="Wortman J.R."/>
            <person name="Yandell M.D."/>
            <person name="Zhang Q."/>
            <person name="Chen L.X."/>
            <person name="Brandon R.C."/>
            <person name="Rogers Y.-H.C."/>
            <person name="Blazej R.G."/>
            <person name="Champe M."/>
            <person name="Pfeiffer B.D."/>
            <person name="Wan K.H."/>
            <person name="Doyle C."/>
            <person name="Baxter E.G."/>
            <person name="Helt G."/>
            <person name="Nelson C.R."/>
            <person name="Miklos G.L.G."/>
            <person name="Abril J.F."/>
            <person name="Agbayani A."/>
            <person name="An H.-J."/>
            <person name="Andrews-Pfannkoch C."/>
            <person name="Baldwin D."/>
            <person name="Ballew R.M."/>
            <person name="Basu A."/>
            <person name="Baxendale J."/>
            <person name="Bayraktaroglu L."/>
            <person name="Beasley E.M."/>
            <person name="Beeson K.Y."/>
            <person name="Benos P.V."/>
            <person name="Berman B.P."/>
            <person name="Bhandari D."/>
            <person name="Bolshakov S."/>
            <person name="Borkova D."/>
            <person name="Botchan M.R."/>
            <person name="Bouck J."/>
            <person name="Brokstein P."/>
            <person name="Brottier P."/>
            <person name="Burtis K.C."/>
            <person name="Busam D.A."/>
            <person name="Butler H."/>
            <person name="Cadieu E."/>
            <person name="Center A."/>
            <person name="Chandra I."/>
            <person name="Cherry J.M."/>
            <person name="Cawley S."/>
            <person name="Dahlke C."/>
            <person name="Davenport L.B."/>
            <person name="Davies P."/>
            <person name="de Pablos B."/>
            <person name="Delcher A."/>
            <person name="Deng Z."/>
            <person name="Mays A.D."/>
            <person name="Dew I."/>
            <person name="Dietz S.M."/>
            <person name="Dodson K."/>
            <person name="Doup L.E."/>
            <person name="Downes M."/>
            <person name="Dugan-Rocha S."/>
            <person name="Dunkov B.C."/>
            <person name="Dunn P."/>
            <person name="Durbin K.J."/>
            <person name="Evangelista C.C."/>
            <person name="Ferraz C."/>
            <person name="Ferriera S."/>
            <person name="Fleischmann W."/>
            <person name="Fosler C."/>
            <person name="Gabrielian A.E."/>
            <person name="Garg N.S."/>
            <person name="Gelbart W.M."/>
            <person name="Glasser K."/>
            <person name="Glodek A."/>
            <person name="Gong F."/>
            <person name="Gorrell J.H."/>
            <person name="Gu Z."/>
            <person name="Guan P."/>
            <person name="Harris M."/>
            <person name="Harris N.L."/>
            <person name="Harvey D.A."/>
            <person name="Heiman T.J."/>
            <person name="Hernandez J.R."/>
            <person name="Houck J."/>
            <person name="Hostin D."/>
            <person name="Houston K.A."/>
            <person name="Howland T.J."/>
            <person name="Wei M.-H."/>
            <person name="Ibegwam C."/>
            <person name="Jalali M."/>
            <person name="Kalush F."/>
            <person name="Karpen G.H."/>
            <person name="Ke Z."/>
            <person name="Kennison J.A."/>
            <person name="Ketchum K.A."/>
            <person name="Kimmel B.E."/>
            <person name="Kodira C.D."/>
            <person name="Kraft C.L."/>
            <person name="Kravitz S."/>
            <person name="Kulp D."/>
            <person name="Lai Z."/>
            <person name="Lasko P."/>
            <person name="Lei Y."/>
            <person name="Levitsky A.A."/>
            <person name="Li J.H."/>
            <person name="Li Z."/>
            <person name="Liang Y."/>
            <person name="Lin X."/>
            <person name="Liu X."/>
            <person name="Mattei B."/>
            <person name="McIntosh T.C."/>
            <person name="McLeod M.P."/>
            <person name="McPherson D."/>
            <person name="Merkulov G."/>
            <person name="Milshina N.V."/>
            <person name="Mobarry C."/>
            <person name="Morris J."/>
            <person name="Moshrefi A."/>
            <person name="Mount S.M."/>
            <person name="Moy M."/>
            <person name="Murphy B."/>
            <person name="Murphy L."/>
            <person name="Muzny D.M."/>
            <person name="Nelson D.L."/>
            <person name="Nelson D.R."/>
            <person name="Nelson K.A."/>
            <person name="Nixon K."/>
            <person name="Nusskern D.R."/>
            <person name="Pacleb J.M."/>
            <person name="Palazzolo M."/>
            <person name="Pittman G.S."/>
            <person name="Pan S."/>
            <person name="Pollard J."/>
            <person name="Puri V."/>
            <person name="Reese M.G."/>
            <person name="Reinert K."/>
            <person name="Remington K."/>
            <person name="Saunders R.D.C."/>
            <person name="Scheeler F."/>
            <person name="Shen H."/>
            <person name="Shue B.C."/>
            <person name="Siden-Kiamos I."/>
            <person name="Simpson M."/>
            <person name="Skupski M.P."/>
            <person name="Smith T.J."/>
            <person name="Spier E."/>
            <person name="Spradling A.C."/>
            <person name="Stapleton M."/>
            <person name="Strong R."/>
            <person name="Sun E."/>
            <person name="Svirskas R."/>
            <person name="Tector C."/>
            <person name="Turner R."/>
            <person name="Venter E."/>
            <person name="Wang A.H."/>
            <person name="Wang X."/>
            <person name="Wang Z.-Y."/>
            <person name="Wassarman D.A."/>
            <person name="Weinstock G.M."/>
            <person name="Weissenbach J."/>
            <person name="Williams S.M."/>
            <person name="Woodage T."/>
            <person name="Worley K.C."/>
            <person name="Wu D."/>
            <person name="Yang S."/>
            <person name="Yao Q.A."/>
            <person name="Ye J."/>
            <person name="Yeh R.-F."/>
            <person name="Zaveri J.S."/>
            <person name="Zhan M."/>
            <person name="Zhang G."/>
            <person name="Zhao Q."/>
            <person name="Zheng L."/>
            <person name="Zheng X.H."/>
            <person name="Zhong F.N."/>
            <person name="Zhong W."/>
            <person name="Zhou X."/>
            <person name="Zhu S.C."/>
            <person name="Zhu X."/>
            <person name="Smith H.O."/>
            <person name="Gibbs R.A."/>
            <person name="Myers E.W."/>
            <person name="Rubin G.M."/>
            <person name="Venter J.C."/>
        </authorList>
    </citation>
    <scope>NUCLEOTIDE SEQUENCE [LARGE SCALE GENOMIC DNA]</scope>
    <source>
        <strain>Berkeley</strain>
    </source>
</reference>
<reference key="2">
    <citation type="journal article" date="2002" name="Genome Biol.">
        <title>Annotation of the Drosophila melanogaster euchromatic genome: a systematic review.</title>
        <authorList>
            <person name="Misra S."/>
            <person name="Crosby M.A."/>
            <person name="Mungall C.J."/>
            <person name="Matthews B.B."/>
            <person name="Campbell K.S."/>
            <person name="Hradecky P."/>
            <person name="Huang Y."/>
            <person name="Kaminker J.S."/>
            <person name="Millburn G.H."/>
            <person name="Prochnik S.E."/>
            <person name="Smith C.D."/>
            <person name="Tupy J.L."/>
            <person name="Whitfield E.J."/>
            <person name="Bayraktaroglu L."/>
            <person name="Berman B.P."/>
            <person name="Bettencourt B.R."/>
            <person name="Celniker S.E."/>
            <person name="de Grey A.D.N.J."/>
            <person name="Drysdale R.A."/>
            <person name="Harris N.L."/>
            <person name="Richter J."/>
            <person name="Russo S."/>
            <person name="Schroeder A.J."/>
            <person name="Shu S.Q."/>
            <person name="Stapleton M."/>
            <person name="Yamada C."/>
            <person name="Ashburner M."/>
            <person name="Gelbart W.M."/>
            <person name="Rubin G.M."/>
            <person name="Lewis S.E."/>
        </authorList>
    </citation>
    <scope>GENOME REANNOTATION</scope>
    <source>
        <strain>Berkeley</strain>
    </source>
</reference>
<reference key="3">
    <citation type="journal article" date="2006" name="Proc. Natl. Acad. Sci. U.S.A.">
        <title>Drosophila Rtf1 functions in histone methylation, gene expression, and Notch signaling.</title>
        <authorList>
            <person name="Tenney K."/>
            <person name="Gerber M."/>
            <person name="Ilvarsonn A."/>
            <person name="Schneider J."/>
            <person name="Gause M."/>
            <person name="Dorsett D."/>
            <person name="Eissenberg J.C."/>
            <person name="Shilatifard A."/>
        </authorList>
    </citation>
    <scope>FUNCTION</scope>
    <scope>DEVELOPMENTAL STAGE</scope>
    <scope>DISRUPTION PHENOTYPE</scope>
</reference>
<reference key="4">
    <citation type="journal article" date="2006" name="Mol. Cell. Biol.">
        <title>Drosophila Paf1 modulates chromatin structure at actively transcribed genes.</title>
        <authorList>
            <person name="Adelman K."/>
            <person name="Wei W."/>
            <person name="Ardehali M.B."/>
            <person name="Werner J."/>
            <person name="Zhu B."/>
            <person name="Reinberg D."/>
            <person name="Lis J.T."/>
        </authorList>
    </citation>
    <scope>FUNCTION</scope>
    <scope>SUBCELLULAR LOCATION</scope>
    <scope>SUBUNIT</scope>
</reference>
<reference key="5">
    <citation type="journal article" date="2008" name="J. Proteome Res.">
        <title>Phosphoproteome analysis of Drosophila melanogaster embryos.</title>
        <authorList>
            <person name="Zhai B."/>
            <person name="Villen J."/>
            <person name="Beausoleil S.A."/>
            <person name="Mintseris J."/>
            <person name="Gygi S.P."/>
        </authorList>
    </citation>
    <scope>PHOSPHORYLATION [LARGE SCALE ANALYSIS] AT SER-49; SER-51; SER-53; SER-269; SER-271; TYR-384; SER-385; SER-388; SER-390; SER-391; SER-412; SER-413 AND SER-415</scope>
    <scope>IDENTIFICATION BY MASS SPECTROMETRY</scope>
    <source>
        <tissue>Embryo</tissue>
    </source>
</reference>
<keyword id="KW-0010">Activator</keyword>
<keyword id="KW-0158">Chromosome</keyword>
<keyword id="KW-0175">Coiled coil</keyword>
<keyword id="KW-0914">Notch signaling pathway</keyword>
<keyword id="KW-0539">Nucleus</keyword>
<keyword id="KW-0597">Phosphoprotein</keyword>
<keyword id="KW-1185">Reference proteome</keyword>
<keyword id="KW-0804">Transcription</keyword>
<keyword id="KW-0805">Transcription regulation</keyword>
<comment type="function">
    <text evidence="4 5">Plays a role in transcription-coupled histone modification. Required for methylation of 'Lys-4' of histone H3. Plays a role in regulation of transcription. Required for maximal induction of heat-shock genes. Plays a role in Notch signaling in the wing margins.</text>
</comment>
<comment type="subunit">
    <text evidence="4">Interacts with the RNA polymerase II complex. May interact with the PAF1 complex.</text>
</comment>
<comment type="subcellular location">
    <subcellularLocation>
        <location evidence="4">Nucleus</location>
        <location evidence="4">Nucleoplasm</location>
    </subcellularLocation>
    <subcellularLocation>
        <location evidence="4">Chromosome</location>
    </subcellularLocation>
    <text>Co-localizes with Paf1 and RNA polymerase II on transcriptionally active sites on chromosomes.</text>
</comment>
<comment type="developmental stage">
    <text evidence="5">Detected in embryo. Expression is very low in larvae, pupae or adults.</text>
</comment>
<comment type="disruption phenotype">
    <text evidence="5">Death at pupal stage. Weaker mutants that live to adulthood exhibit reduced wing width.</text>
</comment>
<accession>Q9W261</accession>
<dbReference type="EMBL" id="AE013599">
    <property type="protein sequence ID" value="AAF46837.1"/>
    <property type="molecule type" value="Genomic_DNA"/>
</dbReference>
<dbReference type="RefSeq" id="NP_001286717.1">
    <property type="nucleotide sequence ID" value="NM_001299788.1"/>
</dbReference>
<dbReference type="RefSeq" id="NP_611665.1">
    <property type="nucleotide sequence ID" value="NM_137821.3"/>
</dbReference>
<dbReference type="SMR" id="Q9W261"/>
<dbReference type="BioGRID" id="63170">
    <property type="interactions" value="10"/>
</dbReference>
<dbReference type="ComplexPortal" id="CPX-2370">
    <property type="entry name" value="PAF1 complex"/>
</dbReference>
<dbReference type="FunCoup" id="Q9W261">
    <property type="interactions" value="2387"/>
</dbReference>
<dbReference type="IntAct" id="Q9W261">
    <property type="interactions" value="4"/>
</dbReference>
<dbReference type="STRING" id="7227.FBpp0309752"/>
<dbReference type="GlyGen" id="Q9W261">
    <property type="glycosylation" value="1 site"/>
</dbReference>
<dbReference type="iPTMnet" id="Q9W261"/>
<dbReference type="PaxDb" id="7227-FBpp0071731"/>
<dbReference type="DNASU" id="37554"/>
<dbReference type="EnsemblMetazoa" id="FBtr0071820">
    <property type="protein sequence ID" value="FBpp0071731"/>
    <property type="gene ID" value="FBgn0034722"/>
</dbReference>
<dbReference type="EnsemblMetazoa" id="FBtr0342988">
    <property type="protein sequence ID" value="FBpp0309752"/>
    <property type="gene ID" value="FBgn0034722"/>
</dbReference>
<dbReference type="GeneID" id="37554"/>
<dbReference type="KEGG" id="dme:Dmel_CG10955"/>
<dbReference type="UCSC" id="CG10955-RA">
    <property type="organism name" value="d. melanogaster"/>
</dbReference>
<dbReference type="AGR" id="FB:FBgn0034722"/>
<dbReference type="CTD" id="23168"/>
<dbReference type="FlyBase" id="FBgn0034722">
    <property type="gene designation" value="Rtf1"/>
</dbReference>
<dbReference type="VEuPathDB" id="VectorBase:FBgn0034722"/>
<dbReference type="eggNOG" id="KOG2402">
    <property type="taxonomic scope" value="Eukaryota"/>
</dbReference>
<dbReference type="GeneTree" id="ENSGT00940000168478"/>
<dbReference type="HOGENOM" id="CLU_018644_0_0_1"/>
<dbReference type="InParanoid" id="Q9W261"/>
<dbReference type="OMA" id="ISGCYAR"/>
<dbReference type="OrthoDB" id="166375at2759"/>
<dbReference type="PhylomeDB" id="Q9W261"/>
<dbReference type="BioGRID-ORCS" id="37554">
    <property type="hits" value="0 hits in 1 CRISPR screen"/>
</dbReference>
<dbReference type="ChiTaRS" id="Rtf1">
    <property type="organism name" value="fly"/>
</dbReference>
<dbReference type="GenomeRNAi" id="37554"/>
<dbReference type="PRO" id="PR:Q9W261"/>
<dbReference type="Proteomes" id="UP000000803">
    <property type="component" value="Chromosome 2R"/>
</dbReference>
<dbReference type="Bgee" id="FBgn0034722">
    <property type="expression patterns" value="Expressed in egg cell and 178 other cell types or tissues"/>
</dbReference>
<dbReference type="ExpressionAtlas" id="Q9W261">
    <property type="expression patterns" value="baseline and differential"/>
</dbReference>
<dbReference type="GO" id="GO:0016593">
    <property type="term" value="C:Cdc73/Paf1 complex"/>
    <property type="evidence" value="ECO:0000318"/>
    <property type="project" value="GO_Central"/>
</dbReference>
<dbReference type="GO" id="GO:0000785">
    <property type="term" value="C:chromatin"/>
    <property type="evidence" value="ECO:0000315"/>
    <property type="project" value="UniProtKB"/>
</dbReference>
<dbReference type="GO" id="GO:0000791">
    <property type="term" value="C:euchromatin"/>
    <property type="evidence" value="ECO:0000314"/>
    <property type="project" value="FlyBase"/>
</dbReference>
<dbReference type="GO" id="GO:0005634">
    <property type="term" value="C:nucleus"/>
    <property type="evidence" value="ECO:0000314"/>
    <property type="project" value="UniProtKB"/>
</dbReference>
<dbReference type="GO" id="GO:0003677">
    <property type="term" value="F:DNA binding"/>
    <property type="evidence" value="ECO:0007669"/>
    <property type="project" value="InterPro"/>
</dbReference>
<dbReference type="GO" id="GO:1990269">
    <property type="term" value="F:RNA polymerase II C-terminal domain phosphoserine binding"/>
    <property type="evidence" value="ECO:0000318"/>
    <property type="project" value="GO_Central"/>
</dbReference>
<dbReference type="GO" id="GO:0007219">
    <property type="term" value="P:Notch signaling pathway"/>
    <property type="evidence" value="ECO:0007669"/>
    <property type="project" value="UniProtKB-KW"/>
</dbReference>
<dbReference type="GO" id="GO:0045893">
    <property type="term" value="P:positive regulation of DNA-templated transcription"/>
    <property type="evidence" value="ECO:0000315"/>
    <property type="project" value="FlyBase"/>
</dbReference>
<dbReference type="GO" id="GO:0045944">
    <property type="term" value="P:positive regulation of transcription by RNA polymerase II"/>
    <property type="evidence" value="ECO:0000315"/>
    <property type="project" value="UniProtKB"/>
</dbReference>
<dbReference type="FunFam" id="3.90.70.200:FF:000001">
    <property type="entry name" value="RNA polymerase-associated protein RTF1 homolog"/>
    <property type="match status" value="1"/>
</dbReference>
<dbReference type="Gene3D" id="3.90.70.200">
    <property type="entry name" value="Plus-3 domain"/>
    <property type="match status" value="1"/>
</dbReference>
<dbReference type="InterPro" id="IPR004343">
    <property type="entry name" value="Plus-3_dom"/>
</dbReference>
<dbReference type="InterPro" id="IPR036128">
    <property type="entry name" value="Plus3-like_sf"/>
</dbReference>
<dbReference type="PANTHER" id="PTHR13115">
    <property type="entry name" value="RNA POLYMERASE-ASSOCIATED PROTEIN RTF1 HOMOLOG"/>
    <property type="match status" value="1"/>
</dbReference>
<dbReference type="PANTHER" id="PTHR13115:SF8">
    <property type="entry name" value="RNA POLYMERASE-ASSOCIATED PROTEIN RTF1 HOMOLOG"/>
    <property type="match status" value="1"/>
</dbReference>
<dbReference type="Pfam" id="PF03126">
    <property type="entry name" value="Plus-3"/>
    <property type="match status" value="1"/>
</dbReference>
<dbReference type="SMART" id="SM00719">
    <property type="entry name" value="Plus3"/>
    <property type="match status" value="1"/>
</dbReference>
<dbReference type="SUPFAM" id="SSF159042">
    <property type="entry name" value="Plus3-like"/>
    <property type="match status" value="1"/>
</dbReference>
<dbReference type="PROSITE" id="PS51360">
    <property type="entry name" value="PLUS3"/>
    <property type="match status" value="1"/>
</dbReference>
<organism>
    <name type="scientific">Drosophila melanogaster</name>
    <name type="common">Fruit fly</name>
    <dbReference type="NCBI Taxonomy" id="7227"/>
    <lineage>
        <taxon>Eukaryota</taxon>
        <taxon>Metazoa</taxon>
        <taxon>Ecdysozoa</taxon>
        <taxon>Arthropoda</taxon>
        <taxon>Hexapoda</taxon>
        <taxon>Insecta</taxon>
        <taxon>Pterygota</taxon>
        <taxon>Neoptera</taxon>
        <taxon>Endopterygota</taxon>
        <taxon>Diptera</taxon>
        <taxon>Brachycera</taxon>
        <taxon>Muscomorpha</taxon>
        <taxon>Ephydroidea</taxon>
        <taxon>Drosophilidae</taxon>
        <taxon>Drosophila</taxon>
        <taxon>Sophophora</taxon>
    </lineage>
</organism>
<sequence>MGKRRTQSLIDSNSSDSDSESETNLESDLMSLAKKRKKPQTAAKSSSRSDSDSDWANNKAGAPSSKKKKRQKPSRDSSSSESNWDDDSQDERQPARQSPAQTQQEHKPPEQASQPAQLSEQEEGEVSDSDSDKSKSNSSSSGSDSSSSSSSSDSEFDDGFDDDLMGDDEDRRRLNGLSEKERETEIYKRIEQREIMRTRWEIERKLKLARRGEKNQEKSKNKGERAKKKKEKREKKARKAREAQAPLPTQASTSTLLDVEPKPSNEVRSASPLSTPALNRDAASTSAAVASIMPDDAASSAGVSDYFDHKERSKERKKNVEANKTDDKRSNAMALLKAKREGKAKREEEEAKRMAEKDRDDDKEELDSVSGCKSAVKLKASEIYSDDSGSSDWDEEEKPAGKRSRSNSSKASSESEDEEKAPQRPVFITTREDLNKLRLSRYKMERFVNLPIFESTVLNCFVRISIGNNGQKPVYRVAEIVGVVETGKIYSLGTTRTNRGLRLKHGTQERVFRLEFISNQEFTENEFNKWNEVCQQSHVQMPTIDLIAIKQNDIKKALNYEFKDEDVDKIVEEKNRFRNRPTNYAMKKTCLMKERDAAMLRGDYDIAQDLGQQIDELENRASELDKRRSHTLNLISYINDRNRKKNVEDAEKAILEEARANKGLKISDPFTRRITQPRMGFKGAKKDEDDMQLAPLPPPPPGKKRPNEAGTSSASVRSTDSKDYSLYSLHDFDIDLDVPLPVNTNSVPKPASKPAETVSKRSLNLEDYKKKRGLI</sequence>
<feature type="chain" id="PRO_0000255935" description="RNA polymerase-associated protein Rtf1">
    <location>
        <begin position="1"/>
        <end position="775"/>
    </location>
</feature>
<feature type="domain" description="Plus3" evidence="2">
    <location>
        <begin position="428"/>
        <end position="559"/>
    </location>
</feature>
<feature type="region of interest" description="Disordered" evidence="3">
    <location>
        <begin position="1"/>
        <end position="370"/>
    </location>
</feature>
<feature type="region of interest" description="Disordered" evidence="3">
    <location>
        <begin position="385"/>
        <end position="427"/>
    </location>
</feature>
<feature type="region of interest" description="Disordered" evidence="3">
    <location>
        <begin position="673"/>
        <end position="720"/>
    </location>
</feature>
<feature type="region of interest" description="Disordered" evidence="3">
    <location>
        <begin position="738"/>
        <end position="775"/>
    </location>
</feature>
<feature type="coiled-coil region" evidence="1">
    <location>
        <begin position="604"/>
        <end position="665"/>
    </location>
</feature>
<feature type="compositionally biased region" description="Acidic residues" evidence="3">
    <location>
        <begin position="120"/>
        <end position="129"/>
    </location>
</feature>
<feature type="compositionally biased region" description="Low complexity" evidence="3">
    <location>
        <begin position="136"/>
        <end position="153"/>
    </location>
</feature>
<feature type="compositionally biased region" description="Acidic residues" evidence="3">
    <location>
        <begin position="154"/>
        <end position="168"/>
    </location>
</feature>
<feature type="compositionally biased region" description="Basic and acidic residues" evidence="3">
    <location>
        <begin position="169"/>
        <end position="224"/>
    </location>
</feature>
<feature type="compositionally biased region" description="Basic residues" evidence="3">
    <location>
        <begin position="225"/>
        <end position="239"/>
    </location>
</feature>
<feature type="compositionally biased region" description="Polar residues" evidence="3">
    <location>
        <begin position="247"/>
        <end position="256"/>
    </location>
</feature>
<feature type="compositionally biased region" description="Polar residues" evidence="3">
    <location>
        <begin position="266"/>
        <end position="288"/>
    </location>
</feature>
<feature type="compositionally biased region" description="Basic and acidic residues" evidence="3">
    <location>
        <begin position="306"/>
        <end position="330"/>
    </location>
</feature>
<feature type="compositionally biased region" description="Basic and acidic residues" evidence="3">
    <location>
        <begin position="338"/>
        <end position="360"/>
    </location>
</feature>
<feature type="compositionally biased region" description="Polar residues" evidence="3">
    <location>
        <begin position="709"/>
        <end position="718"/>
    </location>
</feature>
<feature type="modified residue" description="Phosphoserine" evidence="6">
    <location>
        <position position="49"/>
    </location>
</feature>
<feature type="modified residue" description="Phosphoserine" evidence="6">
    <location>
        <position position="51"/>
    </location>
</feature>
<feature type="modified residue" description="Phosphoserine" evidence="6">
    <location>
        <position position="53"/>
    </location>
</feature>
<feature type="modified residue" description="Phosphoserine" evidence="6">
    <location>
        <position position="269"/>
    </location>
</feature>
<feature type="modified residue" description="Phosphoserine" evidence="6">
    <location>
        <position position="271"/>
    </location>
</feature>
<feature type="modified residue" description="Phosphotyrosine" evidence="6">
    <location>
        <position position="384"/>
    </location>
</feature>
<feature type="modified residue" description="Phosphoserine" evidence="6">
    <location>
        <position position="385"/>
    </location>
</feature>
<feature type="modified residue" description="Phosphoserine" evidence="6">
    <location>
        <position position="388"/>
    </location>
</feature>
<feature type="modified residue" description="Phosphoserine" evidence="6">
    <location>
        <position position="390"/>
    </location>
</feature>
<feature type="modified residue" description="Phosphoserine" evidence="6">
    <location>
        <position position="391"/>
    </location>
</feature>
<feature type="modified residue" description="Phosphoserine" evidence="6">
    <location>
        <position position="412"/>
    </location>
</feature>
<feature type="modified residue" description="Phosphoserine" evidence="6">
    <location>
        <position position="413"/>
    </location>
</feature>
<feature type="modified residue" description="Phosphoserine" evidence="6">
    <location>
        <position position="415"/>
    </location>
</feature>
<gene>
    <name type="primary">Rtf1</name>
    <name type="ORF">CG10955</name>
</gene>
<protein>
    <recommendedName>
        <fullName>RNA polymerase-associated protein Rtf1</fullName>
        <shortName>dRtf1</shortName>
    </recommendedName>
</protein>
<name>RTF1_DROME</name>